<gene>
    <name evidence="1" type="primary">ispF</name>
    <name type="ordered locus">PA3627</name>
</gene>
<accession>P57708</accession>
<accession>Q9HY03</accession>
<dbReference type="EC" id="4.6.1.12" evidence="1"/>
<dbReference type="EMBL" id="AE004091">
    <property type="protein sequence ID" value="AAG07015.1"/>
    <property type="molecule type" value="Genomic_DNA"/>
</dbReference>
<dbReference type="PIR" id="A83194">
    <property type="entry name" value="A83194"/>
</dbReference>
<dbReference type="RefSeq" id="WP_003098560.1">
    <property type="nucleotide sequence ID" value="NZ_QZGE01000001.1"/>
</dbReference>
<dbReference type="PDB" id="5B8F">
    <property type="method" value="X-ray"/>
    <property type="resolution" value="1.45 A"/>
    <property type="chains" value="A/B/C=1-157"/>
</dbReference>
<dbReference type="PDBsum" id="5B8F"/>
<dbReference type="SMR" id="P57708"/>
<dbReference type="FunCoup" id="P57708">
    <property type="interactions" value="427"/>
</dbReference>
<dbReference type="STRING" id="208964.PA3627"/>
<dbReference type="PaxDb" id="208964-PA3627"/>
<dbReference type="DNASU" id="880484"/>
<dbReference type="KEGG" id="pae:PA3627"/>
<dbReference type="PATRIC" id="fig|208964.12.peg.3796"/>
<dbReference type="PseudoCAP" id="PA3627"/>
<dbReference type="HOGENOM" id="CLU_084630_2_0_6"/>
<dbReference type="InParanoid" id="P57708"/>
<dbReference type="OrthoDB" id="9804336at2"/>
<dbReference type="PhylomeDB" id="P57708"/>
<dbReference type="BioCyc" id="PAER208964:G1FZ6-3697-MONOMER"/>
<dbReference type="UniPathway" id="UPA00056">
    <property type="reaction ID" value="UER00095"/>
</dbReference>
<dbReference type="EvolutionaryTrace" id="P57708"/>
<dbReference type="Proteomes" id="UP000002438">
    <property type="component" value="Chromosome"/>
</dbReference>
<dbReference type="GO" id="GO:0008685">
    <property type="term" value="F:2-C-methyl-D-erythritol 2,4-cyclodiphosphate synthase activity"/>
    <property type="evidence" value="ECO:0000318"/>
    <property type="project" value="GO_Central"/>
</dbReference>
<dbReference type="GO" id="GO:0046872">
    <property type="term" value="F:metal ion binding"/>
    <property type="evidence" value="ECO:0007669"/>
    <property type="project" value="UniProtKB-KW"/>
</dbReference>
<dbReference type="GO" id="GO:0019288">
    <property type="term" value="P:isopentenyl diphosphate biosynthetic process, methylerythritol 4-phosphate pathway"/>
    <property type="evidence" value="ECO:0007669"/>
    <property type="project" value="UniProtKB-UniRule"/>
</dbReference>
<dbReference type="GO" id="GO:0016114">
    <property type="term" value="P:terpenoid biosynthetic process"/>
    <property type="evidence" value="ECO:0007669"/>
    <property type="project" value="InterPro"/>
</dbReference>
<dbReference type="CDD" id="cd00554">
    <property type="entry name" value="MECDP_synthase"/>
    <property type="match status" value="1"/>
</dbReference>
<dbReference type="FunFam" id="3.30.1330.50:FF:000001">
    <property type="entry name" value="2-C-methyl-D-erythritol 2,4-cyclodiphosphate synthase"/>
    <property type="match status" value="1"/>
</dbReference>
<dbReference type="Gene3D" id="3.30.1330.50">
    <property type="entry name" value="2-C-methyl-D-erythritol 2,4-cyclodiphosphate synthase"/>
    <property type="match status" value="1"/>
</dbReference>
<dbReference type="HAMAP" id="MF_00107">
    <property type="entry name" value="IspF"/>
    <property type="match status" value="1"/>
</dbReference>
<dbReference type="InterPro" id="IPR003526">
    <property type="entry name" value="MECDP_synthase"/>
</dbReference>
<dbReference type="InterPro" id="IPR020555">
    <property type="entry name" value="MECDP_synthase_CS"/>
</dbReference>
<dbReference type="InterPro" id="IPR036571">
    <property type="entry name" value="MECDP_synthase_sf"/>
</dbReference>
<dbReference type="NCBIfam" id="TIGR00151">
    <property type="entry name" value="ispF"/>
    <property type="match status" value="1"/>
</dbReference>
<dbReference type="PANTHER" id="PTHR43181">
    <property type="entry name" value="2-C-METHYL-D-ERYTHRITOL 2,4-CYCLODIPHOSPHATE SYNTHASE, CHLOROPLASTIC"/>
    <property type="match status" value="1"/>
</dbReference>
<dbReference type="PANTHER" id="PTHR43181:SF1">
    <property type="entry name" value="2-C-METHYL-D-ERYTHRITOL 2,4-CYCLODIPHOSPHATE SYNTHASE, CHLOROPLASTIC"/>
    <property type="match status" value="1"/>
</dbReference>
<dbReference type="Pfam" id="PF02542">
    <property type="entry name" value="YgbB"/>
    <property type="match status" value="1"/>
</dbReference>
<dbReference type="SUPFAM" id="SSF69765">
    <property type="entry name" value="IpsF-like"/>
    <property type="match status" value="1"/>
</dbReference>
<dbReference type="PROSITE" id="PS01350">
    <property type="entry name" value="ISPF"/>
    <property type="match status" value="1"/>
</dbReference>
<organism>
    <name type="scientific">Pseudomonas aeruginosa (strain ATCC 15692 / DSM 22644 / CIP 104116 / JCM 14847 / LMG 12228 / 1C / PRS 101 / PAO1)</name>
    <dbReference type="NCBI Taxonomy" id="208964"/>
    <lineage>
        <taxon>Bacteria</taxon>
        <taxon>Pseudomonadati</taxon>
        <taxon>Pseudomonadota</taxon>
        <taxon>Gammaproteobacteria</taxon>
        <taxon>Pseudomonadales</taxon>
        <taxon>Pseudomonadaceae</taxon>
        <taxon>Pseudomonas</taxon>
    </lineage>
</organism>
<comment type="function">
    <text evidence="1">Involved in the biosynthesis of isopentenyl diphosphate (IPP) and dimethylallyl diphosphate (DMAPP), two major building blocks of isoprenoid compounds. Catalyzes the conversion of 4-diphosphocytidyl-2-C-methyl-D-erythritol 2-phosphate (CDP-ME2P) to 2-C-methyl-D-erythritol 2,4-cyclodiphosphate (ME-CPP) with a corresponding release of cytidine 5-monophosphate (CMP).</text>
</comment>
<comment type="catalytic activity">
    <reaction evidence="1">
        <text>4-CDP-2-C-methyl-D-erythritol 2-phosphate = 2-C-methyl-D-erythritol 2,4-cyclic diphosphate + CMP</text>
        <dbReference type="Rhea" id="RHEA:23864"/>
        <dbReference type="ChEBI" id="CHEBI:57919"/>
        <dbReference type="ChEBI" id="CHEBI:58483"/>
        <dbReference type="ChEBI" id="CHEBI:60377"/>
        <dbReference type="EC" id="4.6.1.12"/>
    </reaction>
</comment>
<comment type="cofactor">
    <cofactor evidence="1">
        <name>a divalent metal cation</name>
        <dbReference type="ChEBI" id="CHEBI:60240"/>
    </cofactor>
    <text evidence="1">Binds 1 divalent metal cation per subunit.</text>
</comment>
<comment type="pathway">
    <text evidence="1">Isoprenoid biosynthesis; isopentenyl diphosphate biosynthesis via DXP pathway; isopentenyl diphosphate from 1-deoxy-D-xylulose 5-phosphate: step 4/6.</text>
</comment>
<comment type="subunit">
    <text evidence="1">Homotrimer.</text>
</comment>
<comment type="similarity">
    <text evidence="1">Belongs to the IspF family.</text>
</comment>
<protein>
    <recommendedName>
        <fullName evidence="1">2-C-methyl-D-erythritol 2,4-cyclodiphosphate synthase</fullName>
        <shortName evidence="1">MECDP-synthase</shortName>
        <shortName evidence="1">MECPP-synthase</shortName>
        <shortName evidence="1">MECPS</shortName>
        <ecNumber evidence="1">4.6.1.12</ecNumber>
    </recommendedName>
</protein>
<name>ISPF_PSEAE</name>
<sequence>MRIGHGYDVHRFGEGDFITLGGVRIPHKHGLVAHSDGDVLLHALSDALLGAAALGDIGKHFPDTDPRFKGADSRALLRHVVAIVAEKGWKVGNVDATIVAQAPKMAPHIETMRGLIAEDLGVAVDQVNVKATTTERLGFTGREEGIAVHAVALLMAR</sequence>
<reference key="1">
    <citation type="journal article" date="2000" name="Nature">
        <title>Complete genome sequence of Pseudomonas aeruginosa PAO1, an opportunistic pathogen.</title>
        <authorList>
            <person name="Stover C.K."/>
            <person name="Pham X.-Q.T."/>
            <person name="Erwin A.L."/>
            <person name="Mizoguchi S.D."/>
            <person name="Warrener P."/>
            <person name="Hickey M.J."/>
            <person name="Brinkman F.S.L."/>
            <person name="Hufnagle W.O."/>
            <person name="Kowalik D.J."/>
            <person name="Lagrou M."/>
            <person name="Garber R.L."/>
            <person name="Goltry L."/>
            <person name="Tolentino E."/>
            <person name="Westbrock-Wadman S."/>
            <person name="Yuan Y."/>
            <person name="Brody L.L."/>
            <person name="Coulter S.N."/>
            <person name="Folger K.R."/>
            <person name="Kas A."/>
            <person name="Larbig K."/>
            <person name="Lim R.M."/>
            <person name="Smith K.A."/>
            <person name="Spencer D.H."/>
            <person name="Wong G.K.-S."/>
            <person name="Wu Z."/>
            <person name="Paulsen I.T."/>
            <person name="Reizer J."/>
            <person name="Saier M.H. Jr."/>
            <person name="Hancock R.E.W."/>
            <person name="Lory S."/>
            <person name="Olson M.V."/>
        </authorList>
    </citation>
    <scope>NUCLEOTIDE SEQUENCE [LARGE SCALE GENOMIC DNA]</scope>
    <source>
        <strain>ATCC 15692 / DSM 22644 / CIP 104116 / JCM 14847 / LMG 12228 / 1C / PRS 101 / PAO1</strain>
    </source>
</reference>
<keyword id="KW-0002">3D-structure</keyword>
<keyword id="KW-0414">Isoprene biosynthesis</keyword>
<keyword id="KW-0456">Lyase</keyword>
<keyword id="KW-0479">Metal-binding</keyword>
<keyword id="KW-1185">Reference proteome</keyword>
<feature type="chain" id="PRO_0000189495" description="2-C-methyl-D-erythritol 2,4-cyclodiphosphate synthase">
    <location>
        <begin position="1"/>
        <end position="157"/>
    </location>
</feature>
<feature type="binding site" evidence="1">
    <location>
        <begin position="8"/>
        <end position="10"/>
    </location>
    <ligand>
        <name>4-CDP-2-C-methyl-D-erythritol 2-phosphate</name>
        <dbReference type="ChEBI" id="CHEBI:57919"/>
    </ligand>
</feature>
<feature type="binding site" evidence="1">
    <location>
        <position position="8"/>
    </location>
    <ligand>
        <name>a divalent metal cation</name>
        <dbReference type="ChEBI" id="CHEBI:60240"/>
    </ligand>
</feature>
<feature type="binding site" evidence="1">
    <location>
        <position position="10"/>
    </location>
    <ligand>
        <name>a divalent metal cation</name>
        <dbReference type="ChEBI" id="CHEBI:60240"/>
    </ligand>
</feature>
<feature type="binding site" evidence="1">
    <location>
        <begin position="34"/>
        <end position="35"/>
    </location>
    <ligand>
        <name>4-CDP-2-C-methyl-D-erythritol 2-phosphate</name>
        <dbReference type="ChEBI" id="CHEBI:57919"/>
    </ligand>
</feature>
<feature type="binding site" evidence="1">
    <location>
        <position position="42"/>
    </location>
    <ligand>
        <name>a divalent metal cation</name>
        <dbReference type="ChEBI" id="CHEBI:60240"/>
    </ligand>
</feature>
<feature type="binding site" evidence="1">
    <location>
        <begin position="56"/>
        <end position="58"/>
    </location>
    <ligand>
        <name>4-CDP-2-C-methyl-D-erythritol 2-phosphate</name>
        <dbReference type="ChEBI" id="CHEBI:57919"/>
    </ligand>
</feature>
<feature type="binding site" evidence="1">
    <location>
        <begin position="61"/>
        <end position="65"/>
    </location>
    <ligand>
        <name>4-CDP-2-C-methyl-D-erythritol 2-phosphate</name>
        <dbReference type="ChEBI" id="CHEBI:57919"/>
    </ligand>
</feature>
<feature type="binding site" evidence="1">
    <location>
        <begin position="100"/>
        <end position="106"/>
    </location>
    <ligand>
        <name>4-CDP-2-C-methyl-D-erythritol 2-phosphate</name>
        <dbReference type="ChEBI" id="CHEBI:57919"/>
    </ligand>
</feature>
<feature type="binding site" evidence="1">
    <location>
        <begin position="132"/>
        <end position="135"/>
    </location>
    <ligand>
        <name>4-CDP-2-C-methyl-D-erythritol 2-phosphate</name>
        <dbReference type="ChEBI" id="CHEBI:57919"/>
    </ligand>
</feature>
<feature type="binding site" evidence="1">
    <location>
        <position position="139"/>
    </location>
    <ligand>
        <name>4-CDP-2-C-methyl-D-erythritol 2-phosphate</name>
        <dbReference type="ChEBI" id="CHEBI:57919"/>
    </ligand>
</feature>
<feature type="binding site" evidence="1">
    <location>
        <position position="142"/>
    </location>
    <ligand>
        <name>4-CDP-2-C-methyl-D-erythritol 2-phosphate</name>
        <dbReference type="ChEBI" id="CHEBI:57919"/>
    </ligand>
</feature>
<feature type="site" description="Transition state stabilizer" evidence="1">
    <location>
        <position position="34"/>
    </location>
</feature>
<feature type="site" description="Transition state stabilizer" evidence="1">
    <location>
        <position position="133"/>
    </location>
</feature>
<feature type="strand" evidence="2">
    <location>
        <begin position="1"/>
        <end position="14"/>
    </location>
</feature>
<feature type="strand" evidence="2">
    <location>
        <begin position="16"/>
        <end position="20"/>
    </location>
</feature>
<feature type="strand" evidence="2">
    <location>
        <begin position="23"/>
        <end position="26"/>
    </location>
</feature>
<feature type="strand" evidence="2">
    <location>
        <begin position="28"/>
        <end position="31"/>
    </location>
</feature>
<feature type="strand" evidence="2">
    <location>
        <begin position="34"/>
        <end position="36"/>
    </location>
</feature>
<feature type="helix" evidence="2">
    <location>
        <begin position="39"/>
        <end position="51"/>
    </location>
</feature>
<feature type="helix" evidence="2">
    <location>
        <begin position="57"/>
        <end position="60"/>
    </location>
</feature>
<feature type="helix" evidence="2">
    <location>
        <begin position="66"/>
        <end position="68"/>
    </location>
</feature>
<feature type="helix" evidence="2">
    <location>
        <begin position="73"/>
        <end position="86"/>
    </location>
</feature>
<feature type="strand" evidence="2">
    <location>
        <begin position="89"/>
        <end position="99"/>
    </location>
</feature>
<feature type="strand" evidence="2">
    <location>
        <begin position="101"/>
        <end position="103"/>
    </location>
</feature>
<feature type="helix" evidence="2">
    <location>
        <begin position="106"/>
        <end position="108"/>
    </location>
</feature>
<feature type="helix" evidence="2">
    <location>
        <begin position="109"/>
        <end position="120"/>
    </location>
</feature>
<feature type="helix" evidence="2">
    <location>
        <begin position="124"/>
        <end position="126"/>
    </location>
</feature>
<feature type="strand" evidence="2">
    <location>
        <begin position="127"/>
        <end position="132"/>
    </location>
</feature>
<feature type="helix" evidence="2">
    <location>
        <begin position="138"/>
        <end position="141"/>
    </location>
</feature>
<feature type="strand" evidence="2">
    <location>
        <begin position="144"/>
        <end position="156"/>
    </location>
</feature>
<evidence type="ECO:0000255" key="1">
    <source>
        <dbReference type="HAMAP-Rule" id="MF_00107"/>
    </source>
</evidence>
<evidence type="ECO:0007829" key="2">
    <source>
        <dbReference type="PDB" id="5B8F"/>
    </source>
</evidence>
<proteinExistence type="evidence at protein level"/>